<sequence length="455" mass="46089">MNRVSASADDRAAGARPARDLVRVAFGPGVVALGIIAAVTLLQLLIANSDMTGAWGAIASMWLGVHLVPISIGGRALGVMPLLPVLLMVWATARSTARATSPQSSGLVVRWVVASALGGPLLMAAIALAVIHDASSVVTELQTPSALRAFTSVLVVHSVGAATGVWSRVGRRALAATALPDWLHDSMRAAAAGVLALLGLSGVVTAGSLVVHWATMQELYGITDSIFGQFSLTVLSVLYAPNVIVGTSAIAVGSSAHIGFATFSSFAVLGGDIPALPILAAAPTPPLGPAWVALLIVGASSGVAVGQQCARRALPFVAAMAKLLVAAVAGALVMAVLGYGGGGRLGNFGDVGVDEGALVLGVLFWFTFVGWVTVVIAGGISRRPKRLRPAPPVELDADESSPPVDMFDGAASEQPPASVAEDVPPSHDDIANGLKAPTADDEALPLSDEPPPRAD</sequence>
<gene>
    <name type="ordered locus">MT0982</name>
</gene>
<evidence type="ECO:0000255" key="1"/>
<evidence type="ECO:0000256" key="2">
    <source>
        <dbReference type="SAM" id="MobiDB-lite"/>
    </source>
</evidence>
<evidence type="ECO:0000305" key="3"/>
<proteinExistence type="predicted"/>
<keyword id="KW-1003">Cell membrane</keyword>
<keyword id="KW-0472">Membrane</keyword>
<keyword id="KW-1185">Reference proteome</keyword>
<keyword id="KW-0812">Transmembrane</keyword>
<keyword id="KW-1133">Transmembrane helix</keyword>
<name>Y955_MYCTO</name>
<accession>P9WKN2</accession>
<accession>L0T805</accession>
<accession>P64771</accession>
<accession>P71555</accession>
<dbReference type="EMBL" id="AE000516">
    <property type="protein sequence ID" value="AAK45230.1"/>
    <property type="molecule type" value="Genomic_DNA"/>
</dbReference>
<dbReference type="PIR" id="A70717">
    <property type="entry name" value="A70717"/>
</dbReference>
<dbReference type="RefSeq" id="WP_003901049.1">
    <property type="nucleotide sequence ID" value="NZ_KK341227.1"/>
</dbReference>
<dbReference type="KEGG" id="mtc:MT0982"/>
<dbReference type="PATRIC" id="fig|83331.31.peg.1054"/>
<dbReference type="HOGENOM" id="CLU_020665_3_0_11"/>
<dbReference type="Proteomes" id="UP000001020">
    <property type="component" value="Chromosome"/>
</dbReference>
<dbReference type="GO" id="GO:0005886">
    <property type="term" value="C:plasma membrane"/>
    <property type="evidence" value="ECO:0007669"/>
    <property type="project" value="UniProtKB-SubCell"/>
</dbReference>
<dbReference type="InterPro" id="IPR045931">
    <property type="entry name" value="DUF6350"/>
</dbReference>
<dbReference type="Pfam" id="PF19877">
    <property type="entry name" value="DUF6350"/>
    <property type="match status" value="1"/>
</dbReference>
<reference key="1">
    <citation type="journal article" date="2002" name="J. Bacteriol.">
        <title>Whole-genome comparison of Mycobacterium tuberculosis clinical and laboratory strains.</title>
        <authorList>
            <person name="Fleischmann R.D."/>
            <person name="Alland D."/>
            <person name="Eisen J.A."/>
            <person name="Carpenter L."/>
            <person name="White O."/>
            <person name="Peterson J.D."/>
            <person name="DeBoy R.T."/>
            <person name="Dodson R.J."/>
            <person name="Gwinn M.L."/>
            <person name="Haft D.H."/>
            <person name="Hickey E.K."/>
            <person name="Kolonay J.F."/>
            <person name="Nelson W.C."/>
            <person name="Umayam L.A."/>
            <person name="Ermolaeva M.D."/>
            <person name="Salzberg S.L."/>
            <person name="Delcher A."/>
            <person name="Utterback T.R."/>
            <person name="Weidman J.F."/>
            <person name="Khouri H.M."/>
            <person name="Gill J."/>
            <person name="Mikula A."/>
            <person name="Bishai W."/>
            <person name="Jacobs W.R. Jr."/>
            <person name="Venter J.C."/>
            <person name="Fraser C.M."/>
        </authorList>
    </citation>
    <scope>NUCLEOTIDE SEQUENCE [LARGE SCALE GENOMIC DNA]</scope>
    <source>
        <strain>CDC 1551 / Oshkosh</strain>
    </source>
</reference>
<feature type="chain" id="PRO_0000427624" description="Uncharacterized protein MT0982">
    <location>
        <begin position="1"/>
        <end position="455"/>
    </location>
</feature>
<feature type="transmembrane region" description="Helical" evidence="1">
    <location>
        <begin position="26"/>
        <end position="46"/>
    </location>
</feature>
<feature type="transmembrane region" description="Helical" evidence="1">
    <location>
        <begin position="53"/>
        <end position="73"/>
    </location>
</feature>
<feature type="transmembrane region" description="Helical" evidence="1">
    <location>
        <begin position="77"/>
        <end position="97"/>
    </location>
</feature>
<feature type="transmembrane region" description="Helical" evidence="1">
    <location>
        <begin position="111"/>
        <end position="131"/>
    </location>
</feature>
<feature type="transmembrane region" description="Helical" evidence="1">
    <location>
        <begin position="146"/>
        <end position="166"/>
    </location>
</feature>
<feature type="transmembrane region" description="Helical" evidence="1">
    <location>
        <begin position="191"/>
        <end position="211"/>
    </location>
</feature>
<feature type="transmembrane region" description="Helical" evidence="1">
    <location>
        <begin position="232"/>
        <end position="252"/>
    </location>
</feature>
<feature type="transmembrane region" description="Helical" evidence="1">
    <location>
        <begin position="256"/>
        <end position="276"/>
    </location>
</feature>
<feature type="transmembrane region" description="Helical" evidence="1">
    <location>
        <begin position="278"/>
        <end position="298"/>
    </location>
</feature>
<feature type="transmembrane region" description="Helical" evidence="1">
    <location>
        <begin position="323"/>
        <end position="343"/>
    </location>
</feature>
<feature type="transmembrane region" description="Helical" evidence="1">
    <location>
        <begin position="357"/>
        <end position="377"/>
    </location>
</feature>
<feature type="region of interest" description="Disordered" evidence="2">
    <location>
        <begin position="384"/>
        <end position="455"/>
    </location>
</feature>
<protein>
    <recommendedName>
        <fullName>Uncharacterized protein MT0982</fullName>
    </recommendedName>
</protein>
<comment type="subcellular location">
    <subcellularLocation>
        <location evidence="3">Cell membrane</location>
        <topology evidence="3">Multi-pass membrane protein</topology>
    </subcellularLocation>
</comment>
<organism>
    <name type="scientific">Mycobacterium tuberculosis (strain CDC 1551 / Oshkosh)</name>
    <dbReference type="NCBI Taxonomy" id="83331"/>
    <lineage>
        <taxon>Bacteria</taxon>
        <taxon>Bacillati</taxon>
        <taxon>Actinomycetota</taxon>
        <taxon>Actinomycetes</taxon>
        <taxon>Mycobacteriales</taxon>
        <taxon>Mycobacteriaceae</taxon>
        <taxon>Mycobacterium</taxon>
        <taxon>Mycobacterium tuberculosis complex</taxon>
    </lineage>
</organism>